<gene>
    <name evidence="1" type="primary">nqrE</name>
    <name type="ordered locus">CJA_1769</name>
</gene>
<accession>B3PFQ6</accession>
<proteinExistence type="inferred from homology"/>
<sequence>MEHLLSLLVRSVFIENMALAFFLGMCSFLAMSKKINAAIGLGIAVIVVQTVTVPANNLLLTYLLKEDALAWAGVTGVDLTFLSFISFIGVIAAIVQIMEMVMDKYMPALYNALGVFLPLITVNCVIMGGSLFMVERDYHFAESVVYGFGSGAGWAIAIVLLAGILEKMKYSDIPEGLRGLGITFITVGLMSLGFMSFGGISL</sequence>
<feature type="chain" id="PRO_1000191698" description="Na(+)-translocating NADH-quinone reductase subunit E">
    <location>
        <begin position="1"/>
        <end position="202"/>
    </location>
</feature>
<feature type="transmembrane region" description="Helical" evidence="1">
    <location>
        <begin position="11"/>
        <end position="31"/>
    </location>
</feature>
<feature type="transmembrane region" description="Helical" evidence="1">
    <location>
        <begin position="35"/>
        <end position="55"/>
    </location>
</feature>
<feature type="transmembrane region" description="Helical" evidence="1">
    <location>
        <begin position="81"/>
        <end position="101"/>
    </location>
</feature>
<feature type="transmembrane region" description="Helical" evidence="1">
    <location>
        <begin position="114"/>
        <end position="134"/>
    </location>
</feature>
<feature type="transmembrane region" description="Helical" evidence="1">
    <location>
        <begin position="144"/>
        <end position="164"/>
    </location>
</feature>
<feature type="transmembrane region" description="Helical" evidence="1">
    <location>
        <begin position="180"/>
        <end position="200"/>
    </location>
</feature>
<dbReference type="EC" id="7.2.1.1" evidence="1"/>
<dbReference type="EMBL" id="CP000934">
    <property type="protein sequence ID" value="ACE84857.1"/>
    <property type="molecule type" value="Genomic_DNA"/>
</dbReference>
<dbReference type="RefSeq" id="WP_012487389.1">
    <property type="nucleotide sequence ID" value="NC_010995.1"/>
</dbReference>
<dbReference type="SMR" id="B3PFQ6"/>
<dbReference type="STRING" id="498211.CJA_1769"/>
<dbReference type="KEGG" id="cja:CJA_1769"/>
<dbReference type="eggNOG" id="COG2209">
    <property type="taxonomic scope" value="Bacteria"/>
</dbReference>
<dbReference type="HOGENOM" id="CLU_095255_0_0_6"/>
<dbReference type="OrthoDB" id="9803631at2"/>
<dbReference type="Proteomes" id="UP000001036">
    <property type="component" value="Chromosome"/>
</dbReference>
<dbReference type="GO" id="GO:0009276">
    <property type="term" value="C:Gram-negative-bacterium-type cell wall"/>
    <property type="evidence" value="ECO:0007669"/>
    <property type="project" value="InterPro"/>
</dbReference>
<dbReference type="GO" id="GO:0005886">
    <property type="term" value="C:plasma membrane"/>
    <property type="evidence" value="ECO:0007669"/>
    <property type="project" value="UniProtKB-SubCell"/>
</dbReference>
<dbReference type="GO" id="GO:0016655">
    <property type="term" value="F:oxidoreductase activity, acting on NAD(P)H, quinone or similar compound as acceptor"/>
    <property type="evidence" value="ECO:0007669"/>
    <property type="project" value="UniProtKB-UniRule"/>
</dbReference>
<dbReference type="GO" id="GO:0022904">
    <property type="term" value="P:respiratory electron transport chain"/>
    <property type="evidence" value="ECO:0007669"/>
    <property type="project" value="InterPro"/>
</dbReference>
<dbReference type="GO" id="GO:0006814">
    <property type="term" value="P:sodium ion transport"/>
    <property type="evidence" value="ECO:0007669"/>
    <property type="project" value="UniProtKB-UniRule"/>
</dbReference>
<dbReference type="HAMAP" id="MF_00429">
    <property type="entry name" value="NqrE"/>
    <property type="match status" value="1"/>
</dbReference>
<dbReference type="InterPro" id="IPR003667">
    <property type="entry name" value="NqrDE/RnfAE"/>
</dbReference>
<dbReference type="InterPro" id="IPR050133">
    <property type="entry name" value="NqrDE/RnfAE_oxidrdctase"/>
</dbReference>
<dbReference type="InterPro" id="IPR010967">
    <property type="entry name" value="NqrE"/>
</dbReference>
<dbReference type="NCBIfam" id="TIGR01940">
    <property type="entry name" value="nqrE"/>
    <property type="match status" value="1"/>
</dbReference>
<dbReference type="PANTHER" id="PTHR30335">
    <property type="entry name" value="INTEGRAL MEMBRANE PROTEIN OF SOXR-REDUCING COMPLEX"/>
    <property type="match status" value="1"/>
</dbReference>
<dbReference type="PANTHER" id="PTHR30335:SF1">
    <property type="entry name" value="NA(+)-TRANSLOCATING NADH-QUINONE REDUCTASE SUBUNIT E"/>
    <property type="match status" value="1"/>
</dbReference>
<dbReference type="Pfam" id="PF02508">
    <property type="entry name" value="Rnf-Nqr"/>
    <property type="match status" value="1"/>
</dbReference>
<dbReference type="PIRSF" id="PIRSF006102">
    <property type="entry name" value="NQR_DE"/>
    <property type="match status" value="1"/>
</dbReference>
<protein>
    <recommendedName>
        <fullName evidence="1">Na(+)-translocating NADH-quinone reductase subunit E</fullName>
        <shortName evidence="1">Na(+)-NQR subunit E</shortName>
        <shortName evidence="1">Na(+)-translocating NQR subunit E</shortName>
        <ecNumber evidence="1">7.2.1.1</ecNumber>
    </recommendedName>
    <alternativeName>
        <fullName evidence="1">NQR complex subunit E</fullName>
    </alternativeName>
    <alternativeName>
        <fullName evidence="1">NQR-1 subunit E</fullName>
    </alternativeName>
</protein>
<evidence type="ECO:0000255" key="1">
    <source>
        <dbReference type="HAMAP-Rule" id="MF_00429"/>
    </source>
</evidence>
<keyword id="KW-0997">Cell inner membrane</keyword>
<keyword id="KW-1003">Cell membrane</keyword>
<keyword id="KW-0406">Ion transport</keyword>
<keyword id="KW-0472">Membrane</keyword>
<keyword id="KW-0520">NAD</keyword>
<keyword id="KW-1185">Reference proteome</keyword>
<keyword id="KW-0915">Sodium</keyword>
<keyword id="KW-0739">Sodium transport</keyword>
<keyword id="KW-1278">Translocase</keyword>
<keyword id="KW-0812">Transmembrane</keyword>
<keyword id="KW-1133">Transmembrane helix</keyword>
<keyword id="KW-0813">Transport</keyword>
<keyword id="KW-0830">Ubiquinone</keyword>
<reference key="1">
    <citation type="journal article" date="2008" name="J. Bacteriol.">
        <title>Insights into plant cell wall degradation from the genome sequence of the soil bacterium Cellvibrio japonicus.</title>
        <authorList>
            <person name="DeBoy R.T."/>
            <person name="Mongodin E.F."/>
            <person name="Fouts D.E."/>
            <person name="Tailford L.E."/>
            <person name="Khouri H."/>
            <person name="Emerson J.B."/>
            <person name="Mohamoud Y."/>
            <person name="Watkins K."/>
            <person name="Henrissat B."/>
            <person name="Gilbert H.J."/>
            <person name="Nelson K.E."/>
        </authorList>
    </citation>
    <scope>NUCLEOTIDE SEQUENCE [LARGE SCALE GENOMIC DNA]</scope>
    <source>
        <strain>Ueda107</strain>
    </source>
</reference>
<organism>
    <name type="scientific">Cellvibrio japonicus (strain Ueda107)</name>
    <name type="common">Pseudomonas fluorescens subsp. cellulosa</name>
    <dbReference type="NCBI Taxonomy" id="498211"/>
    <lineage>
        <taxon>Bacteria</taxon>
        <taxon>Pseudomonadati</taxon>
        <taxon>Pseudomonadota</taxon>
        <taxon>Gammaproteobacteria</taxon>
        <taxon>Cellvibrionales</taxon>
        <taxon>Cellvibrionaceae</taxon>
        <taxon>Cellvibrio</taxon>
    </lineage>
</organism>
<name>NQRE_CELJU</name>
<comment type="function">
    <text evidence="1">NQR complex catalyzes the reduction of ubiquinone-1 to ubiquinol by two successive reactions, coupled with the transport of Na(+) ions from the cytoplasm to the periplasm. NqrA to NqrE are probably involved in the second step, the conversion of ubisemiquinone to ubiquinol.</text>
</comment>
<comment type="catalytic activity">
    <reaction evidence="1">
        <text>a ubiquinone + n Na(+)(in) + NADH + H(+) = a ubiquinol + n Na(+)(out) + NAD(+)</text>
        <dbReference type="Rhea" id="RHEA:47748"/>
        <dbReference type="Rhea" id="RHEA-COMP:9565"/>
        <dbReference type="Rhea" id="RHEA-COMP:9566"/>
        <dbReference type="ChEBI" id="CHEBI:15378"/>
        <dbReference type="ChEBI" id="CHEBI:16389"/>
        <dbReference type="ChEBI" id="CHEBI:17976"/>
        <dbReference type="ChEBI" id="CHEBI:29101"/>
        <dbReference type="ChEBI" id="CHEBI:57540"/>
        <dbReference type="ChEBI" id="CHEBI:57945"/>
        <dbReference type="EC" id="7.2.1.1"/>
    </reaction>
</comment>
<comment type="subunit">
    <text evidence="1">Composed of six subunits; NqrA, NqrB, NqrC, NqrD, NqrE and NqrF.</text>
</comment>
<comment type="subcellular location">
    <subcellularLocation>
        <location evidence="1">Cell inner membrane</location>
        <topology evidence="1">Multi-pass membrane protein</topology>
    </subcellularLocation>
</comment>
<comment type="similarity">
    <text evidence="1">Belongs to the NqrDE/RnfAE family.</text>
</comment>